<name>LIS1_FUSV7</name>
<comment type="function">
    <text evidence="1">Positively regulates the activity of the minus-end directed microtubule motor protein dynein. May enhance dynein-mediated microtubule sliding by targeting dynein to the microtubule plus end. Required for nuclear migration during vegetative growth as well as development. Required for retrograde early endosome (EE) transport from the hyphal tip. Required for localization of dynein to the mitotic spindle poles. Recruits additional proteins to the dynein complex at SPBs.</text>
</comment>
<comment type="subunit">
    <text evidence="1">Self-associates. Interacts with NDL1 and dynein.</text>
</comment>
<comment type="subcellular location">
    <subcellularLocation>
        <location evidence="1">Cytoplasm</location>
        <location evidence="1">Cytoskeleton</location>
    </subcellularLocation>
    <subcellularLocation>
        <location evidence="1">Cytoplasm</location>
        <location evidence="1">Cytoskeleton</location>
        <location evidence="1">Spindle pole</location>
    </subcellularLocation>
    <text evidence="1">Localizes to the plus ends of microtubules at the hyphal tip and the mitotic spindle poles.</text>
</comment>
<comment type="domain">
    <text evidence="1">Dimerization mediated by the LisH domain may be required to activate dynein.</text>
</comment>
<comment type="similarity">
    <text evidence="1">Belongs to the WD repeat LIS1/nudF family.</text>
</comment>
<feature type="chain" id="PRO_0000405084" description="Nuclear distribution protein PAC1">
    <location>
        <begin position="1"/>
        <end position="448"/>
    </location>
</feature>
<feature type="domain" description="LisH" evidence="1">
    <location>
        <begin position="9"/>
        <end position="41"/>
    </location>
</feature>
<feature type="repeat" description="WD 1">
    <location>
        <begin position="102"/>
        <end position="143"/>
    </location>
</feature>
<feature type="repeat" description="WD 2">
    <location>
        <begin position="145"/>
        <end position="185"/>
    </location>
</feature>
<feature type="repeat" description="WD 3">
    <location>
        <begin position="189"/>
        <end position="236"/>
    </location>
</feature>
<feature type="repeat" description="WD 4">
    <location>
        <begin position="239"/>
        <end position="278"/>
    </location>
</feature>
<feature type="repeat" description="WD 5">
    <location>
        <begin position="283"/>
        <end position="343"/>
    </location>
</feature>
<feature type="repeat" description="WD 6">
    <location>
        <begin position="345"/>
        <end position="384"/>
    </location>
</feature>
<feature type="repeat" description="WD 7">
    <location>
        <begin position="389"/>
        <end position="444"/>
    </location>
</feature>
<feature type="region of interest" description="Disordered" evidence="2">
    <location>
        <begin position="74"/>
        <end position="95"/>
    </location>
</feature>
<reference key="1">
    <citation type="journal article" date="2009" name="PLoS Genet.">
        <title>The genome of Nectria haematococca: contribution of supernumerary chromosomes to gene expansion.</title>
        <authorList>
            <person name="Coleman J.J."/>
            <person name="Rounsley S.D."/>
            <person name="Rodriguez-Carres M."/>
            <person name="Kuo A."/>
            <person name="Wasmann C.C."/>
            <person name="Grimwood J."/>
            <person name="Schmutz J."/>
            <person name="Taga M."/>
            <person name="White G.J."/>
            <person name="Zhou S."/>
            <person name="Schwartz D.C."/>
            <person name="Freitag M."/>
            <person name="Ma L.-J."/>
            <person name="Danchin E.G.J."/>
            <person name="Henrissat B."/>
            <person name="Coutinho P.M."/>
            <person name="Nelson D.R."/>
            <person name="Straney D."/>
            <person name="Napoli C.A."/>
            <person name="Barker B.M."/>
            <person name="Gribskov M."/>
            <person name="Rep M."/>
            <person name="Kroken S."/>
            <person name="Molnar I."/>
            <person name="Rensing C."/>
            <person name="Kennell J.C."/>
            <person name="Zamora J."/>
            <person name="Farman M.L."/>
            <person name="Selker E.U."/>
            <person name="Salamov A."/>
            <person name="Shapiro H."/>
            <person name="Pangilinan J."/>
            <person name="Lindquist E."/>
            <person name="Lamers C."/>
            <person name="Grigoriev I.V."/>
            <person name="Geiser D.M."/>
            <person name="Covert S.F."/>
            <person name="Temporini E."/>
            <person name="VanEtten H.D."/>
        </authorList>
    </citation>
    <scope>NUCLEOTIDE SEQUENCE [LARGE SCALE GENOMIC DNA]</scope>
    <source>
        <strain>ATCC MYA-4622 / CBS 123669 / FGSC 9596 / NRRL 45880 / 77-13-4</strain>
    </source>
</reference>
<dbReference type="EMBL" id="GG698910">
    <property type="protein sequence ID" value="EEU40693.1"/>
    <property type="molecule type" value="Genomic_DNA"/>
</dbReference>
<dbReference type="RefSeq" id="XP_003046406.1">
    <property type="nucleotide sequence ID" value="XM_003046360.1"/>
</dbReference>
<dbReference type="SMR" id="C7Z6H2"/>
<dbReference type="FunCoup" id="C7Z6H2">
    <property type="interactions" value="46"/>
</dbReference>
<dbReference type="STRING" id="660122.C7Z6H2"/>
<dbReference type="EnsemblFungi" id="NechaT66115">
    <property type="protein sequence ID" value="NechaP66115"/>
    <property type="gene ID" value="NechaG66115"/>
</dbReference>
<dbReference type="GeneID" id="9667966"/>
<dbReference type="KEGG" id="nhe:NECHADRAFT_66115"/>
<dbReference type="VEuPathDB" id="FungiDB:NECHADRAFT_66115"/>
<dbReference type="eggNOG" id="KOG0295">
    <property type="taxonomic scope" value="Eukaryota"/>
</dbReference>
<dbReference type="HOGENOM" id="CLU_000288_57_15_1"/>
<dbReference type="InParanoid" id="C7Z6H2"/>
<dbReference type="OMA" id="WHVATKE"/>
<dbReference type="OrthoDB" id="10264588at2759"/>
<dbReference type="Proteomes" id="UP000005206">
    <property type="component" value="Unassembled WGS sequence"/>
</dbReference>
<dbReference type="GO" id="GO:0005737">
    <property type="term" value="C:cytoplasm"/>
    <property type="evidence" value="ECO:0007669"/>
    <property type="project" value="UniProtKB-UniRule"/>
</dbReference>
<dbReference type="GO" id="GO:0005874">
    <property type="term" value="C:microtubule"/>
    <property type="evidence" value="ECO:0007669"/>
    <property type="project" value="UniProtKB-KW"/>
</dbReference>
<dbReference type="GO" id="GO:0005875">
    <property type="term" value="C:microtubule associated complex"/>
    <property type="evidence" value="ECO:0007669"/>
    <property type="project" value="UniProtKB-UniRule"/>
</dbReference>
<dbReference type="GO" id="GO:0000922">
    <property type="term" value="C:spindle pole"/>
    <property type="evidence" value="ECO:0007669"/>
    <property type="project" value="UniProtKB-SubCell"/>
</dbReference>
<dbReference type="GO" id="GO:1990234">
    <property type="term" value="C:transferase complex"/>
    <property type="evidence" value="ECO:0007669"/>
    <property type="project" value="UniProtKB-ARBA"/>
</dbReference>
<dbReference type="GO" id="GO:0070840">
    <property type="term" value="F:dynein complex binding"/>
    <property type="evidence" value="ECO:0007669"/>
    <property type="project" value="UniProtKB-UniRule"/>
</dbReference>
<dbReference type="GO" id="GO:0051301">
    <property type="term" value="P:cell division"/>
    <property type="evidence" value="ECO:0007669"/>
    <property type="project" value="UniProtKB-KW"/>
</dbReference>
<dbReference type="GO" id="GO:0000132">
    <property type="term" value="P:establishment of mitotic spindle orientation"/>
    <property type="evidence" value="ECO:0007669"/>
    <property type="project" value="UniProtKB-UniRule"/>
</dbReference>
<dbReference type="GO" id="GO:0051012">
    <property type="term" value="P:microtubule sliding"/>
    <property type="evidence" value="ECO:0007669"/>
    <property type="project" value="UniProtKB-UniRule"/>
</dbReference>
<dbReference type="CDD" id="cd00200">
    <property type="entry name" value="WD40"/>
    <property type="match status" value="1"/>
</dbReference>
<dbReference type="FunFam" id="2.130.10.10:FF:000342">
    <property type="entry name" value="Nuclear distribution protein PAC1"/>
    <property type="match status" value="1"/>
</dbReference>
<dbReference type="Gene3D" id="1.20.960.30">
    <property type="match status" value="1"/>
</dbReference>
<dbReference type="Gene3D" id="2.130.10.10">
    <property type="entry name" value="YVTN repeat-like/Quinoprotein amine dehydrogenase"/>
    <property type="match status" value="1"/>
</dbReference>
<dbReference type="HAMAP" id="MF_03141">
    <property type="entry name" value="lis1"/>
    <property type="match status" value="1"/>
</dbReference>
<dbReference type="InterPro" id="IPR017252">
    <property type="entry name" value="Dynein_regulator_LIS1"/>
</dbReference>
<dbReference type="InterPro" id="IPR020472">
    <property type="entry name" value="G-protein_beta_WD-40_rep"/>
</dbReference>
<dbReference type="InterPro" id="IPR037190">
    <property type="entry name" value="LIS1_N"/>
</dbReference>
<dbReference type="InterPro" id="IPR056795">
    <property type="entry name" value="PAC1-like_LisH-like_dom"/>
</dbReference>
<dbReference type="InterPro" id="IPR015943">
    <property type="entry name" value="WD40/YVTN_repeat-like_dom_sf"/>
</dbReference>
<dbReference type="InterPro" id="IPR019775">
    <property type="entry name" value="WD40_repeat_CS"/>
</dbReference>
<dbReference type="InterPro" id="IPR036322">
    <property type="entry name" value="WD40_repeat_dom_sf"/>
</dbReference>
<dbReference type="InterPro" id="IPR001680">
    <property type="entry name" value="WD40_rpt"/>
</dbReference>
<dbReference type="PANTHER" id="PTHR22847:SF637">
    <property type="entry name" value="WD REPEAT DOMAIN 5B"/>
    <property type="match status" value="1"/>
</dbReference>
<dbReference type="PANTHER" id="PTHR22847">
    <property type="entry name" value="WD40 REPEAT PROTEIN"/>
    <property type="match status" value="1"/>
</dbReference>
<dbReference type="Pfam" id="PF24951">
    <property type="entry name" value="LisH_PAC1"/>
    <property type="match status" value="1"/>
</dbReference>
<dbReference type="Pfam" id="PF00400">
    <property type="entry name" value="WD40"/>
    <property type="match status" value="6"/>
</dbReference>
<dbReference type="PIRSF" id="PIRSF037647">
    <property type="entry name" value="Dynein_regulator_Lis1"/>
    <property type="match status" value="1"/>
</dbReference>
<dbReference type="PRINTS" id="PR00320">
    <property type="entry name" value="GPROTEINBRPT"/>
</dbReference>
<dbReference type="SMART" id="SM00320">
    <property type="entry name" value="WD40"/>
    <property type="match status" value="7"/>
</dbReference>
<dbReference type="SUPFAM" id="SSF109925">
    <property type="entry name" value="Lissencephaly-1 protein (Lis-1, PAF-AH alpha) N-terminal domain"/>
    <property type="match status" value="1"/>
</dbReference>
<dbReference type="SUPFAM" id="SSF50978">
    <property type="entry name" value="WD40 repeat-like"/>
    <property type="match status" value="1"/>
</dbReference>
<dbReference type="PROSITE" id="PS00678">
    <property type="entry name" value="WD_REPEATS_1"/>
    <property type="match status" value="3"/>
</dbReference>
<dbReference type="PROSITE" id="PS50082">
    <property type="entry name" value="WD_REPEATS_2"/>
    <property type="match status" value="6"/>
</dbReference>
<dbReference type="PROSITE" id="PS50294">
    <property type="entry name" value="WD_REPEATS_REGION"/>
    <property type="match status" value="1"/>
</dbReference>
<proteinExistence type="inferred from homology"/>
<accession>C7Z6H2</accession>
<organism>
    <name type="scientific">Fusarium vanettenii (strain ATCC MYA-4622 / CBS 123669 / FGSC 9596 / NRRL 45880 / 77-13-4)</name>
    <name type="common">Fusarium solani subsp. pisi</name>
    <dbReference type="NCBI Taxonomy" id="660122"/>
    <lineage>
        <taxon>Eukaryota</taxon>
        <taxon>Fungi</taxon>
        <taxon>Dikarya</taxon>
        <taxon>Ascomycota</taxon>
        <taxon>Pezizomycotina</taxon>
        <taxon>Sordariomycetes</taxon>
        <taxon>Hypocreomycetidae</taxon>
        <taxon>Hypocreales</taxon>
        <taxon>Nectriaceae</taxon>
        <taxon>Fusarium</taxon>
        <taxon>Fusarium solani species complex</taxon>
        <taxon>Fusarium vanettenii</taxon>
    </lineage>
</organism>
<evidence type="ECO:0000255" key="1">
    <source>
        <dbReference type="HAMAP-Rule" id="MF_03141"/>
    </source>
</evidence>
<evidence type="ECO:0000256" key="2">
    <source>
        <dbReference type="SAM" id="MobiDB-lite"/>
    </source>
</evidence>
<protein>
    <recommendedName>
        <fullName evidence="1">Nuclear distribution protein PAC1</fullName>
    </recommendedName>
    <alternativeName>
        <fullName evidence="1">Lissencephaly-1 homolog</fullName>
        <shortName evidence="1">LIS-1</shortName>
    </alternativeName>
    <alternativeName>
        <fullName evidence="1">nudF homolog</fullName>
    </alternativeName>
</protein>
<keyword id="KW-0131">Cell cycle</keyword>
<keyword id="KW-0132">Cell division</keyword>
<keyword id="KW-0175">Coiled coil</keyword>
<keyword id="KW-0963">Cytoplasm</keyword>
<keyword id="KW-0206">Cytoskeleton</keyword>
<keyword id="KW-0493">Microtubule</keyword>
<keyword id="KW-0498">Mitosis</keyword>
<keyword id="KW-1185">Reference proteome</keyword>
<keyword id="KW-0677">Repeat</keyword>
<keyword id="KW-0813">Transport</keyword>
<keyword id="KW-0853">WD repeat</keyword>
<gene>
    <name evidence="1" type="primary">PAC1</name>
    <name evidence="1" type="synonym">LIS1</name>
    <name type="ORF">NECHADRAFT_66115</name>
</gene>
<sequence length="448" mass="49460">MSRTLTSRQAEELHKSIIAYLAANNFQDSVTAMRTELNLGEEIFDPATAKKYETLLEKKWTSVVRLQKKTELDSATPTSLSNRKQDPASWLPAGPPRHVLQSHRTPINCVAFHPIYSSIASGDEDAIIKIWDWEFGELERTVKGHTKAVLDLDYGGPKGHTLLASCSSDLTIKLWDPSDEYKNIRTLPGHDHSVSAVRFIPSGAPGAPLSGNLLASASRDVTVRIWDVTTGYCLKTIRGHSDWIRDVSPSLDGKYLLSTGNDRTLRLWDISMNTPETKMVMIGHEHCVECCAFAPPTSYQHLATMAGLKKAPPASSTAEFMATGSRDKTIRLWDSRGTCIKTLIGHDNWVRSLVFHPSGKFLLSVSDDKTIRCWDLSQEGKCVKTLEGMHEHFITSLRWAPPITKGPADEANGEIGTPKKAAAAPLDVQIRCVIATGSVDTSLRIFSR</sequence>